<name>LUTC_BACAC</name>
<dbReference type="EMBL" id="CP001215">
    <property type="protein sequence ID" value="ACP16857.1"/>
    <property type="molecule type" value="Genomic_DNA"/>
</dbReference>
<dbReference type="RefSeq" id="WP_000147197.1">
    <property type="nucleotide sequence ID" value="NC_012581.1"/>
</dbReference>
<dbReference type="SMR" id="C3LAQ2"/>
<dbReference type="KEGG" id="bah:BAMEG_3280"/>
<dbReference type="HOGENOM" id="CLU_090664_1_0_9"/>
<dbReference type="GO" id="GO:0006089">
    <property type="term" value="P:lactate metabolic process"/>
    <property type="evidence" value="ECO:0007669"/>
    <property type="project" value="UniProtKB-UniRule"/>
</dbReference>
<dbReference type="Gene3D" id="3.40.50.10420">
    <property type="entry name" value="NagB/RpiA/CoA transferase-like"/>
    <property type="match status" value="1"/>
</dbReference>
<dbReference type="HAMAP" id="MF_02104">
    <property type="entry name" value="LutC"/>
    <property type="match status" value="1"/>
</dbReference>
<dbReference type="InterPro" id="IPR024185">
    <property type="entry name" value="FTHF_cligase-like_sf"/>
</dbReference>
<dbReference type="InterPro" id="IPR003741">
    <property type="entry name" value="LUD_dom"/>
</dbReference>
<dbReference type="InterPro" id="IPR022823">
    <property type="entry name" value="LutC"/>
</dbReference>
<dbReference type="InterPro" id="IPR037171">
    <property type="entry name" value="NagB/RpiA_transferase-like"/>
</dbReference>
<dbReference type="PANTHER" id="PTHR43682">
    <property type="entry name" value="LACTATE UTILIZATION PROTEIN C"/>
    <property type="match status" value="1"/>
</dbReference>
<dbReference type="PANTHER" id="PTHR43682:SF1">
    <property type="entry name" value="LACTATE UTILIZATION PROTEIN C"/>
    <property type="match status" value="1"/>
</dbReference>
<dbReference type="Pfam" id="PF02589">
    <property type="entry name" value="LUD_dom"/>
    <property type="match status" value="1"/>
</dbReference>
<dbReference type="SUPFAM" id="SSF100950">
    <property type="entry name" value="NagB/RpiA/CoA transferase-like"/>
    <property type="match status" value="1"/>
</dbReference>
<evidence type="ECO:0000255" key="1">
    <source>
        <dbReference type="HAMAP-Rule" id="MF_02104"/>
    </source>
</evidence>
<sequence>MTGLIQNRDSFLDNIAKELGRTRKTDGVERPVWKNNVNKETLKDYSQEELLEVFKNQCTNIHTTVVETTNDRLREDIQKVIVENGGGPIMLSADERFDSYGLTSLFKEELPKQNVEVNVWDPEKKEENMRIAERANIGIAFSDYTLAESGTIVVQSHKGQGRSLHFLPTVYFAIIPRETLVPRITQAVQDMNTRVENGEEVASCINFITGPSNSADIEMNLVVGVHGPLKAVYFIV</sequence>
<proteinExistence type="inferred from homology"/>
<feature type="chain" id="PRO_0000383990" description="Lactate utilization protein C">
    <location>
        <begin position="1"/>
        <end position="236"/>
    </location>
</feature>
<gene>
    <name evidence="1" type="primary">lutC</name>
    <name type="ordered locus">BAMEG_3280</name>
</gene>
<reference key="1">
    <citation type="submission" date="2008-10" db="EMBL/GenBank/DDBJ databases">
        <title>Genome sequence of Bacillus anthracis str. CDC 684.</title>
        <authorList>
            <person name="Dodson R.J."/>
            <person name="Munk A.C."/>
            <person name="Brettin T."/>
            <person name="Bruce D."/>
            <person name="Detter C."/>
            <person name="Tapia R."/>
            <person name="Han C."/>
            <person name="Sutton G."/>
            <person name="Sims D."/>
        </authorList>
    </citation>
    <scope>NUCLEOTIDE SEQUENCE [LARGE SCALE GENOMIC DNA]</scope>
    <source>
        <strain>CDC 684 / NRRL 3495</strain>
    </source>
</reference>
<protein>
    <recommendedName>
        <fullName evidence="1">Lactate utilization protein C</fullName>
    </recommendedName>
</protein>
<comment type="function">
    <text evidence="1">Is involved in L-lactate degradation and allows cells to grow with lactate as the sole carbon source.</text>
</comment>
<comment type="similarity">
    <text evidence="1">Belongs to the LutC/YkgG family.</text>
</comment>
<organism>
    <name type="scientific">Bacillus anthracis (strain CDC 684 / NRRL 3495)</name>
    <dbReference type="NCBI Taxonomy" id="568206"/>
    <lineage>
        <taxon>Bacteria</taxon>
        <taxon>Bacillati</taxon>
        <taxon>Bacillota</taxon>
        <taxon>Bacilli</taxon>
        <taxon>Bacillales</taxon>
        <taxon>Bacillaceae</taxon>
        <taxon>Bacillus</taxon>
        <taxon>Bacillus cereus group</taxon>
    </lineage>
</organism>
<accession>C3LAQ2</accession>